<comment type="catalytic activity">
    <reaction>
        <text>D-arabinose 5-phosphate + phosphoenolpyruvate + H2O = 3-deoxy-alpha-D-manno-2-octulosonate-8-phosphate + phosphate</text>
        <dbReference type="Rhea" id="RHEA:14053"/>
        <dbReference type="ChEBI" id="CHEBI:15377"/>
        <dbReference type="ChEBI" id="CHEBI:43474"/>
        <dbReference type="ChEBI" id="CHEBI:57693"/>
        <dbReference type="ChEBI" id="CHEBI:58702"/>
        <dbReference type="ChEBI" id="CHEBI:85985"/>
        <dbReference type="EC" id="2.5.1.55"/>
    </reaction>
</comment>
<comment type="pathway">
    <text>Carbohydrate biosynthesis; 3-deoxy-D-manno-octulosonate biosynthesis; 3-deoxy-D-manno-octulosonate from D-ribulose 5-phosphate: step 2/3.</text>
</comment>
<comment type="pathway">
    <text>Bacterial outer membrane biogenesis; lipopolysaccharide biosynthesis.</text>
</comment>
<comment type="subcellular location">
    <subcellularLocation>
        <location evidence="1">Cytoplasm</location>
    </subcellularLocation>
</comment>
<comment type="similarity">
    <text evidence="2">Belongs to the KdsA family.</text>
</comment>
<evidence type="ECO:0000250" key="1"/>
<evidence type="ECO:0000305" key="2"/>
<keyword id="KW-0963">Cytoplasm</keyword>
<keyword id="KW-0448">Lipopolysaccharide biosynthesis</keyword>
<keyword id="KW-1185">Reference proteome</keyword>
<keyword id="KW-0808">Transferase</keyword>
<dbReference type="EC" id="2.5.1.55"/>
<dbReference type="EMBL" id="AE015451">
    <property type="protein sequence ID" value="AAN67426.1"/>
    <property type="molecule type" value="Genomic_DNA"/>
</dbReference>
<dbReference type="RefSeq" id="NP_743962.1">
    <property type="nucleotide sequence ID" value="NC_002947.4"/>
</dbReference>
<dbReference type="SMR" id="Q88LX0"/>
<dbReference type="STRING" id="160488.PP_1807"/>
<dbReference type="PaxDb" id="160488-PP_1807"/>
<dbReference type="KEGG" id="ppu:PP_1807"/>
<dbReference type="PATRIC" id="fig|160488.4.peg.1906"/>
<dbReference type="eggNOG" id="COG2877">
    <property type="taxonomic scope" value="Bacteria"/>
</dbReference>
<dbReference type="HOGENOM" id="CLU_036666_0_0_6"/>
<dbReference type="OrthoDB" id="9776934at2"/>
<dbReference type="PhylomeDB" id="Q88LX0"/>
<dbReference type="BioCyc" id="PPUT160488:G1G01-1910-MONOMER"/>
<dbReference type="UniPathway" id="UPA00030"/>
<dbReference type="UniPathway" id="UPA00357">
    <property type="reaction ID" value="UER00474"/>
</dbReference>
<dbReference type="Proteomes" id="UP000000556">
    <property type="component" value="Chromosome"/>
</dbReference>
<dbReference type="GO" id="GO:0005737">
    <property type="term" value="C:cytoplasm"/>
    <property type="evidence" value="ECO:0007669"/>
    <property type="project" value="UniProtKB-SubCell"/>
</dbReference>
<dbReference type="GO" id="GO:0008676">
    <property type="term" value="F:3-deoxy-8-phosphooctulonate synthase activity"/>
    <property type="evidence" value="ECO:0007669"/>
    <property type="project" value="UniProtKB-UniRule"/>
</dbReference>
<dbReference type="GO" id="GO:0019294">
    <property type="term" value="P:keto-3-deoxy-D-manno-octulosonic acid biosynthetic process"/>
    <property type="evidence" value="ECO:0007669"/>
    <property type="project" value="UniProtKB-UniRule"/>
</dbReference>
<dbReference type="Gene3D" id="3.20.20.70">
    <property type="entry name" value="Aldolase class I"/>
    <property type="match status" value="1"/>
</dbReference>
<dbReference type="HAMAP" id="MF_00056">
    <property type="entry name" value="KDO8P_synth"/>
    <property type="match status" value="1"/>
</dbReference>
<dbReference type="InterPro" id="IPR013785">
    <property type="entry name" value="Aldolase_TIM"/>
</dbReference>
<dbReference type="InterPro" id="IPR006218">
    <property type="entry name" value="DAHP1/KDSA"/>
</dbReference>
<dbReference type="InterPro" id="IPR006269">
    <property type="entry name" value="KDO8P_synthase"/>
</dbReference>
<dbReference type="NCBIfam" id="TIGR01362">
    <property type="entry name" value="KDO8P_synth"/>
    <property type="match status" value="1"/>
</dbReference>
<dbReference type="NCBIfam" id="NF003543">
    <property type="entry name" value="PRK05198.1"/>
    <property type="match status" value="1"/>
</dbReference>
<dbReference type="NCBIfam" id="NF009109">
    <property type="entry name" value="PRK12457.1"/>
    <property type="match status" value="1"/>
</dbReference>
<dbReference type="PANTHER" id="PTHR21057">
    <property type="entry name" value="PHOSPHO-2-DEHYDRO-3-DEOXYHEPTONATE ALDOLASE"/>
    <property type="match status" value="1"/>
</dbReference>
<dbReference type="Pfam" id="PF00793">
    <property type="entry name" value="DAHP_synth_1"/>
    <property type="match status" value="1"/>
</dbReference>
<dbReference type="SUPFAM" id="SSF51569">
    <property type="entry name" value="Aldolase"/>
    <property type="match status" value="1"/>
</dbReference>
<accession>Q88LX0</accession>
<reference key="1">
    <citation type="journal article" date="2002" name="Environ. Microbiol.">
        <title>Complete genome sequence and comparative analysis of the metabolically versatile Pseudomonas putida KT2440.</title>
        <authorList>
            <person name="Nelson K.E."/>
            <person name="Weinel C."/>
            <person name="Paulsen I.T."/>
            <person name="Dodson R.J."/>
            <person name="Hilbert H."/>
            <person name="Martins dos Santos V.A.P."/>
            <person name="Fouts D.E."/>
            <person name="Gill S.R."/>
            <person name="Pop M."/>
            <person name="Holmes M."/>
            <person name="Brinkac L.M."/>
            <person name="Beanan M.J."/>
            <person name="DeBoy R.T."/>
            <person name="Daugherty S.C."/>
            <person name="Kolonay J.F."/>
            <person name="Madupu R."/>
            <person name="Nelson W.C."/>
            <person name="White O."/>
            <person name="Peterson J.D."/>
            <person name="Khouri H.M."/>
            <person name="Hance I."/>
            <person name="Chris Lee P."/>
            <person name="Holtzapple E.K."/>
            <person name="Scanlan D."/>
            <person name="Tran K."/>
            <person name="Moazzez A."/>
            <person name="Utterback T.R."/>
            <person name="Rizzo M."/>
            <person name="Lee K."/>
            <person name="Kosack D."/>
            <person name="Moestl D."/>
            <person name="Wedler H."/>
            <person name="Lauber J."/>
            <person name="Stjepandic D."/>
            <person name="Hoheisel J."/>
            <person name="Straetz M."/>
            <person name="Heim S."/>
            <person name="Kiewitz C."/>
            <person name="Eisen J.A."/>
            <person name="Timmis K.N."/>
            <person name="Duesterhoeft A."/>
            <person name="Tuemmler B."/>
            <person name="Fraser C.M."/>
        </authorList>
    </citation>
    <scope>NUCLEOTIDE SEQUENCE [LARGE SCALE GENOMIC DNA]</scope>
    <source>
        <strain>ATCC 47054 / DSM 6125 / CFBP 8728 / NCIMB 11950 / KT2440</strain>
    </source>
</reference>
<proteinExistence type="inferred from homology"/>
<organism>
    <name type="scientific">Pseudomonas putida (strain ATCC 47054 / DSM 6125 / CFBP 8728 / NCIMB 11950 / KT2440)</name>
    <dbReference type="NCBI Taxonomy" id="160488"/>
    <lineage>
        <taxon>Bacteria</taxon>
        <taxon>Pseudomonadati</taxon>
        <taxon>Pseudomonadota</taxon>
        <taxon>Gammaproteobacteria</taxon>
        <taxon>Pseudomonadales</taxon>
        <taxon>Pseudomonadaceae</taxon>
        <taxon>Pseudomonas</taxon>
    </lineage>
</organism>
<feature type="chain" id="PRO_0000187152" description="2-dehydro-3-deoxyphosphooctonate aldolase 2">
    <location>
        <begin position="1"/>
        <end position="280"/>
    </location>
</feature>
<gene>
    <name type="primary">kdsA2</name>
    <name type="synonym">kdsA-2</name>
    <name type="ordered locus">PP_1807</name>
</gene>
<name>KDSA2_PSEPK</name>
<sequence length="280" mass="30469">MIKINSTIECSNSAPFVLFGGINVLESEDLALTACAEYVRVTQKLGIPYVFKASFDKANRSSIHSYRGPGMEEGLRIFEKVKAEFGVPIITDVHEIYQTAPVAEVVDVLQLPAFLARQTDLVVALAKTGKPVNIKKPQFLSPSQMQNIVHKFKEAGNDQLILCDRGTCMGYDNLIVDMLGFGVMKRTCQDLPIIFDVTHALQNRDPSGAASGGRREQVVELARAGMGVGLAGLFLEAHPNPDQAKCDGPSALPLDKLEPFLAQIKALDDLVKSFPQLTIA</sequence>
<protein>
    <recommendedName>
        <fullName>2-dehydro-3-deoxyphosphooctonate aldolase 2</fullName>
        <ecNumber>2.5.1.55</ecNumber>
    </recommendedName>
    <alternativeName>
        <fullName>3-deoxy-D-manno-octulosonic acid 8-phosphate synthase 2</fullName>
    </alternativeName>
    <alternativeName>
        <fullName>KDO-8-phosphate synthase 2</fullName>
        <shortName>KDO 8-P synthase 2</shortName>
        <shortName>KDOPS 2</shortName>
    </alternativeName>
    <alternativeName>
        <fullName>Phospho-2-dehydro-3-deoxyoctonate aldolase 2</fullName>
    </alternativeName>
</protein>